<dbReference type="EMBL" id="J02812">
    <property type="protein sequence ID" value="AAA79016.1"/>
    <property type="molecule type" value="Genomic_DNA"/>
</dbReference>
<dbReference type="EMBL" id="U00006">
    <property type="protein sequence ID" value="AAC43125.1"/>
    <property type="molecule type" value="Genomic_DNA"/>
</dbReference>
<dbReference type="EMBL" id="U00096">
    <property type="protein sequence ID" value="AAC77001.1"/>
    <property type="molecule type" value="Genomic_DNA"/>
</dbReference>
<dbReference type="EMBL" id="AP009048">
    <property type="protein sequence ID" value="BAE78033.1"/>
    <property type="molecule type" value="Genomic_DNA"/>
</dbReference>
<dbReference type="EMBL" id="X06663">
    <property type="protein sequence ID" value="CAA29863.1"/>
    <property type="molecule type" value="Genomic_DNA"/>
</dbReference>
<dbReference type="PIR" id="A26430">
    <property type="entry name" value="A26430"/>
</dbReference>
<dbReference type="RefSeq" id="NP_418455.1">
    <property type="nucleotide sequence ID" value="NC_000913.3"/>
</dbReference>
<dbReference type="RefSeq" id="WP_001097274.1">
    <property type="nucleotide sequence ID" value="NZ_LN832404.1"/>
</dbReference>
<dbReference type="PDB" id="4GBY">
    <property type="method" value="X-ray"/>
    <property type="resolution" value="2.81 A"/>
    <property type="chains" value="A=1-491"/>
</dbReference>
<dbReference type="PDB" id="4GBZ">
    <property type="method" value="X-ray"/>
    <property type="resolution" value="2.89 A"/>
    <property type="chains" value="A=1-491"/>
</dbReference>
<dbReference type="PDB" id="4GC0">
    <property type="method" value="X-ray"/>
    <property type="resolution" value="2.60 A"/>
    <property type="chains" value="A=1-491"/>
</dbReference>
<dbReference type="PDB" id="4JA3">
    <property type="method" value="X-ray"/>
    <property type="resolution" value="3.80 A"/>
    <property type="chains" value="A/B=2-485"/>
</dbReference>
<dbReference type="PDB" id="4JA4">
    <property type="method" value="X-ray"/>
    <property type="resolution" value="4.20 A"/>
    <property type="chains" value="A/B/C=2-485"/>
</dbReference>
<dbReference type="PDB" id="4QIQ">
    <property type="method" value="X-ray"/>
    <property type="resolution" value="3.51 A"/>
    <property type="chains" value="A=6-480"/>
</dbReference>
<dbReference type="PDB" id="6N3I">
    <property type="method" value="X-ray"/>
    <property type="resolution" value="3.69 A"/>
    <property type="chains" value="A=1-491"/>
</dbReference>
<dbReference type="PDBsum" id="4GBY"/>
<dbReference type="PDBsum" id="4GBZ"/>
<dbReference type="PDBsum" id="4GC0"/>
<dbReference type="PDBsum" id="4JA3"/>
<dbReference type="PDBsum" id="4JA4"/>
<dbReference type="PDBsum" id="4QIQ"/>
<dbReference type="PDBsum" id="6N3I"/>
<dbReference type="SMR" id="P0AGF4"/>
<dbReference type="BioGRID" id="4262660">
    <property type="interactions" value="13"/>
</dbReference>
<dbReference type="FunCoup" id="P0AGF4">
    <property type="interactions" value="393"/>
</dbReference>
<dbReference type="STRING" id="511145.b4031"/>
<dbReference type="TCDB" id="2.A.1.1.3">
    <property type="family name" value="the major facilitator superfamily (mfs)"/>
</dbReference>
<dbReference type="PaxDb" id="511145-b4031"/>
<dbReference type="EnsemblBacteria" id="AAC77001">
    <property type="protein sequence ID" value="AAC77001"/>
    <property type="gene ID" value="b4031"/>
</dbReference>
<dbReference type="GeneID" id="75169486"/>
<dbReference type="GeneID" id="948529"/>
<dbReference type="KEGG" id="ecj:JW3991"/>
<dbReference type="KEGG" id="eco:b4031"/>
<dbReference type="KEGG" id="ecoc:C3026_21780"/>
<dbReference type="PATRIC" id="fig|1411691.4.peg.2680"/>
<dbReference type="EchoBASE" id="EB1069"/>
<dbReference type="eggNOG" id="COG0477">
    <property type="taxonomic scope" value="Bacteria"/>
</dbReference>
<dbReference type="eggNOG" id="COG2814">
    <property type="taxonomic scope" value="Bacteria"/>
</dbReference>
<dbReference type="HOGENOM" id="CLU_001265_30_5_6"/>
<dbReference type="InParanoid" id="P0AGF4"/>
<dbReference type="OMA" id="WAITASF"/>
<dbReference type="OrthoDB" id="5368493at2"/>
<dbReference type="PhylomeDB" id="P0AGF4"/>
<dbReference type="BioCyc" id="EcoCyc:XYLE-MONOMER"/>
<dbReference type="BioCyc" id="MetaCyc:XYLE-MONOMER"/>
<dbReference type="EvolutionaryTrace" id="P0AGF4"/>
<dbReference type="PRO" id="PR:P0AGF4"/>
<dbReference type="Proteomes" id="UP000000625">
    <property type="component" value="Chromosome"/>
</dbReference>
<dbReference type="GO" id="GO:0016020">
    <property type="term" value="C:membrane"/>
    <property type="evidence" value="ECO:0000318"/>
    <property type="project" value="GO_Central"/>
</dbReference>
<dbReference type="GO" id="GO:0005886">
    <property type="term" value="C:plasma membrane"/>
    <property type="evidence" value="ECO:0000314"/>
    <property type="project" value="EcoCyc"/>
</dbReference>
<dbReference type="GO" id="GO:0015519">
    <property type="term" value="F:D-xylose:proton symporter activity"/>
    <property type="evidence" value="ECO:0000314"/>
    <property type="project" value="EcoCyc"/>
</dbReference>
<dbReference type="GO" id="GO:0022857">
    <property type="term" value="F:transmembrane transporter activity"/>
    <property type="evidence" value="ECO:0000318"/>
    <property type="project" value="GO_Central"/>
</dbReference>
<dbReference type="GO" id="GO:0015753">
    <property type="term" value="P:D-xylose transmembrane transport"/>
    <property type="evidence" value="ECO:0000314"/>
    <property type="project" value="EcoCyc"/>
</dbReference>
<dbReference type="GO" id="GO:0055085">
    <property type="term" value="P:transmembrane transport"/>
    <property type="evidence" value="ECO:0000318"/>
    <property type="project" value="GO_Central"/>
</dbReference>
<dbReference type="CDD" id="cd17359">
    <property type="entry name" value="MFS_XylE_like"/>
    <property type="match status" value="1"/>
</dbReference>
<dbReference type="FunFam" id="1.20.1250.20:FF:000122">
    <property type="entry name" value="D-xylose transporter XylE"/>
    <property type="match status" value="1"/>
</dbReference>
<dbReference type="Gene3D" id="1.20.1250.20">
    <property type="entry name" value="MFS general substrate transporter like domains"/>
    <property type="match status" value="2"/>
</dbReference>
<dbReference type="InterPro" id="IPR020846">
    <property type="entry name" value="MFS_dom"/>
</dbReference>
<dbReference type="InterPro" id="IPR005828">
    <property type="entry name" value="MFS_sugar_transport-like"/>
</dbReference>
<dbReference type="InterPro" id="IPR036259">
    <property type="entry name" value="MFS_trans_sf"/>
</dbReference>
<dbReference type="InterPro" id="IPR050814">
    <property type="entry name" value="Myo-inositol_Transporter"/>
</dbReference>
<dbReference type="InterPro" id="IPR003663">
    <property type="entry name" value="Sugar/inositol_transpt"/>
</dbReference>
<dbReference type="InterPro" id="IPR005829">
    <property type="entry name" value="Sugar_transporter_CS"/>
</dbReference>
<dbReference type="InterPro" id="IPR047984">
    <property type="entry name" value="XylE-like"/>
</dbReference>
<dbReference type="NCBIfam" id="NF007484">
    <property type="entry name" value="PRK10077.1"/>
    <property type="match status" value="1"/>
</dbReference>
<dbReference type="NCBIfam" id="TIGR00879">
    <property type="entry name" value="SP"/>
    <property type="match status" value="1"/>
</dbReference>
<dbReference type="PANTHER" id="PTHR48020">
    <property type="entry name" value="PROTON MYO-INOSITOL COTRANSPORTER"/>
    <property type="match status" value="1"/>
</dbReference>
<dbReference type="PANTHER" id="PTHR48020:SF12">
    <property type="entry name" value="PROTON MYO-INOSITOL COTRANSPORTER"/>
    <property type="match status" value="1"/>
</dbReference>
<dbReference type="Pfam" id="PF00083">
    <property type="entry name" value="Sugar_tr"/>
    <property type="match status" value="1"/>
</dbReference>
<dbReference type="PRINTS" id="PR00171">
    <property type="entry name" value="SUGRTRNSPORT"/>
</dbReference>
<dbReference type="SUPFAM" id="SSF103473">
    <property type="entry name" value="MFS general substrate transporter"/>
    <property type="match status" value="1"/>
</dbReference>
<dbReference type="PROSITE" id="PS50850">
    <property type="entry name" value="MFS"/>
    <property type="match status" value="1"/>
</dbReference>
<dbReference type="PROSITE" id="PS00216">
    <property type="entry name" value="SUGAR_TRANSPORT_1"/>
    <property type="match status" value="1"/>
</dbReference>
<dbReference type="PROSITE" id="PS00217">
    <property type="entry name" value="SUGAR_TRANSPORT_2"/>
    <property type="match status" value="1"/>
</dbReference>
<name>XYLE_ECOLI</name>
<accession>P0AGF4</accession>
<accession>P09098</accession>
<accession>Q2M6S3</accession>
<sequence length="491" mass="53608">MNTQYNSSYIFSITLVATLGGLLFGYDTAVISGTVESLNTVFVAPQNLSESAANSLLGFCVASALIGCIIGGALGGYCSNRFGRRDSLKIAAVLFFISGVGSAWPELGFTSINPDNTVPVYLAGYVPEFVIYRIIGGIGVGLASMLSPMYIAELAPAHIRGKLVSFNQFAIIFGQLLVYCVNYFIARSGDASWLNTDGWRYMFASECIPALLFLMLLYTVPESPRWLMSRGKQEQAEGILRKIMGNTLATQAVQEIKHSLDHGRKTGGRLLMFGVGVIVIGVMLSIFQQFVGINVVLYYAPEVFKTLGASTDIALLQTIIVGVINLTFTVLAIMTVDKFGRKPLQIIGALGMAIGMFSLGTAFYTQAPGIVALLSMLFYVAAFAMSWGPVCWVLLSEIFPNAIRGKALAIAVAAQWLANYFVSWTFPMMDKNSWLVAHFHNGFSYWIYGCMGVLAALFMWKFVPETKGKTLEELEALWEPETKKTQQTATL</sequence>
<protein>
    <recommendedName>
        <fullName>D-xylose-proton symporter</fullName>
    </recommendedName>
    <alternativeName>
        <fullName>D-xylose transporter</fullName>
    </alternativeName>
</protein>
<organism>
    <name type="scientific">Escherichia coli (strain K12)</name>
    <dbReference type="NCBI Taxonomy" id="83333"/>
    <lineage>
        <taxon>Bacteria</taxon>
        <taxon>Pseudomonadati</taxon>
        <taxon>Pseudomonadota</taxon>
        <taxon>Gammaproteobacteria</taxon>
        <taxon>Enterobacterales</taxon>
        <taxon>Enterobacteriaceae</taxon>
        <taxon>Escherichia</taxon>
    </lineage>
</organism>
<feature type="chain" id="PRO_0000050294" description="D-xylose-proton symporter">
    <location>
        <begin position="1"/>
        <end position="491"/>
    </location>
</feature>
<feature type="topological domain" description="Cytoplasmic">
    <location>
        <begin position="1"/>
        <end position="9"/>
    </location>
</feature>
<feature type="transmembrane region" description="Helical; Name=1">
    <location>
        <begin position="10"/>
        <end position="32"/>
    </location>
</feature>
<feature type="topological domain" description="Periplasmic">
    <location>
        <begin position="33"/>
        <end position="58"/>
    </location>
</feature>
<feature type="transmembrane region" description="Helical; Name=2">
    <location>
        <begin position="59"/>
        <end position="79"/>
    </location>
</feature>
<feature type="topological domain" description="Cytoplasmic">
    <location>
        <begin position="80"/>
        <end position="84"/>
    </location>
</feature>
<feature type="transmembrane region" description="Helical; Name=3">
    <location>
        <begin position="85"/>
        <end position="105"/>
    </location>
</feature>
<feature type="topological domain" description="Periplasmic">
    <location>
        <begin position="106"/>
        <end position="128"/>
    </location>
</feature>
<feature type="transmembrane region" description="Helical; Name=4">
    <location>
        <begin position="129"/>
        <end position="150"/>
    </location>
</feature>
<feature type="topological domain" description="Cytoplasmic">
    <location>
        <begin position="151"/>
        <end position="162"/>
    </location>
</feature>
<feature type="transmembrane region" description="Helical; Name=5">
    <location>
        <begin position="163"/>
        <end position="183"/>
    </location>
</feature>
<feature type="topological domain" description="Periplasmic">
    <location>
        <begin position="184"/>
        <end position="200"/>
    </location>
</feature>
<feature type="transmembrane region" description="Helical; Name=6">
    <location>
        <begin position="201"/>
        <end position="221"/>
    </location>
</feature>
<feature type="topological domain" description="Cytoplasmic">
    <location>
        <begin position="222"/>
        <end position="276"/>
    </location>
</feature>
<feature type="transmembrane region" description="Helical; Name=7">
    <location>
        <begin position="277"/>
        <end position="299"/>
    </location>
</feature>
<feature type="topological domain" description="Periplasmic">
    <location>
        <begin position="300"/>
        <end position="312"/>
    </location>
</feature>
<feature type="transmembrane region" description="Helical; Name=8">
    <location>
        <begin position="313"/>
        <end position="334"/>
    </location>
</feature>
<feature type="topological domain" description="Cytoplasmic">
    <location>
        <begin position="335"/>
        <end position="343"/>
    </location>
</feature>
<feature type="transmembrane region" description="Helical; Name=9">
    <location>
        <begin position="344"/>
        <end position="364"/>
    </location>
</feature>
<feature type="topological domain" description="Periplasmic">
    <location>
        <begin position="365"/>
        <end position="369"/>
    </location>
</feature>
<feature type="transmembrane region" description="Helical; Name=10">
    <location>
        <begin position="370"/>
        <end position="390"/>
    </location>
</feature>
<feature type="topological domain" description="Cytoplasmic">
    <location>
        <begin position="391"/>
        <end position="407"/>
    </location>
</feature>
<feature type="transmembrane region" description="Helical; Name=11">
    <location>
        <begin position="408"/>
        <end position="428"/>
    </location>
</feature>
<feature type="topological domain" description="Periplasmic">
    <location>
        <begin position="429"/>
        <end position="442"/>
    </location>
</feature>
<feature type="transmembrane region" description="Helical; Name=12">
    <location>
        <begin position="443"/>
        <end position="463"/>
    </location>
</feature>
<feature type="topological domain" description="Cytoplasmic">
    <location>
        <begin position="464"/>
        <end position="491"/>
    </location>
</feature>
<feature type="binding site" evidence="1 3">
    <location>
        <position position="168"/>
    </location>
    <ligand>
        <name>beta-D-xylose</name>
        <dbReference type="ChEBI" id="CHEBI:28161"/>
    </ligand>
</feature>
<feature type="binding site" evidence="1 3">
    <location>
        <begin position="288"/>
        <end position="289"/>
    </location>
    <ligand>
        <name>beta-D-xylose</name>
        <dbReference type="ChEBI" id="CHEBI:28161"/>
    </ligand>
</feature>
<feature type="binding site" evidence="1 3">
    <location>
        <position position="294"/>
    </location>
    <ligand>
        <name>beta-D-xylose</name>
        <dbReference type="ChEBI" id="CHEBI:28161"/>
    </ligand>
</feature>
<feature type="binding site" evidence="1 3">
    <location>
        <position position="392"/>
    </location>
    <ligand>
        <name>beta-D-xylose</name>
        <dbReference type="ChEBI" id="CHEBI:28161"/>
    </ligand>
</feature>
<feature type="binding site" evidence="1 3">
    <location>
        <position position="415"/>
    </location>
    <ligand>
        <name>beta-D-xylose</name>
        <dbReference type="ChEBI" id="CHEBI:28161"/>
    </ligand>
</feature>
<feature type="mutagenesis site" description="Decreases xylose transport." evidence="1">
    <original>F</original>
    <variation>A</variation>
    <location>
        <position position="24"/>
    </location>
</feature>
<feature type="mutagenesis site" description="Abolishes xylose transport." evidence="1">
    <original>G</original>
    <variation>A</variation>
    <location>
        <position position="83"/>
    </location>
</feature>
<feature type="mutagenesis site" description="Abolishes xylose transport." evidence="1">
    <original>R</original>
    <variation>C</variation>
    <variation>H</variation>
    <variation>L</variation>
    <location>
        <position position="133"/>
    </location>
</feature>
<feature type="mutagenesis site" description="Abolishes xylose transport." evidence="1">
    <original>E</original>
    <variation>A</variation>
    <location>
        <position position="153"/>
    </location>
</feature>
<feature type="mutagenesis site" description="Abolishes xylose transport." evidence="1">
    <original>R</original>
    <variation>A</variation>
    <location>
        <position position="160"/>
    </location>
</feature>
<feature type="mutagenesis site" description="Abolishes xylose transport." evidence="1">
    <original>Q</original>
    <variation>A</variation>
    <location>
        <position position="168"/>
    </location>
</feature>
<feature type="mutagenesis site" description="Abolishes xylose transport." evidence="1">
    <original>Q</original>
    <variation>A</variation>
    <location>
        <position position="288"/>
    </location>
</feature>
<feature type="mutagenesis site" description="Strongly decreases xylose transport." evidence="1">
    <original>Q</original>
    <variation>A</variation>
    <location>
        <position position="289"/>
    </location>
</feature>
<feature type="mutagenesis site" description="Abolishes xylose transport." evidence="1">
    <original>N</original>
    <variation>A</variation>
    <location>
        <position position="294"/>
    </location>
</feature>
<feature type="mutagenesis site" description="Abolishes xylose transport." evidence="1">
    <original>Y</original>
    <variation>A</variation>
    <location>
        <position position="298"/>
    </location>
</feature>
<feature type="mutagenesis site" description="No effect on xylose transport." evidence="1">
    <original>N</original>
    <variation>A</variation>
    <location>
        <position position="325"/>
    </location>
</feature>
<feature type="mutagenesis site" description="Abolishes xylose transport." evidence="1">
    <original>G</original>
    <variation>A</variation>
    <location>
        <position position="340"/>
    </location>
</feature>
<feature type="mutagenesis site" description="Abolishes xylose transport." evidence="1">
    <original>R</original>
    <variation>A</variation>
    <variation>W</variation>
    <location>
        <position position="341"/>
    </location>
</feature>
<feature type="mutagenesis site" description="Abolishes xylose transport." evidence="1">
    <original>W</original>
    <variation>A</variation>
    <location>
        <position position="392"/>
    </location>
</feature>
<feature type="mutagenesis site" description="Abolishes xylose transport." evidence="1">
    <original>E</original>
    <variation>A</variation>
    <location>
        <position position="397"/>
    </location>
</feature>
<feature type="mutagenesis site" description="Strongly decreases xylose transport." evidence="1">
    <original>R</original>
    <variation>A</variation>
    <location>
        <position position="404"/>
    </location>
</feature>
<feature type="mutagenesis site" description="Strongly decreases xylose transport.">
    <original>Q</original>
    <variation>A</variation>
    <location>
        <position position="415"/>
    </location>
</feature>
<feature type="mutagenesis site" description="Strongly decreases xylose transport." evidence="1">
    <original>W</original>
    <variation>A</variation>
    <location>
        <position position="416"/>
    </location>
</feature>
<feature type="sequence conflict" description="In Ref. 6; CAA29863." evidence="2" ref="6">
    <original>A</original>
    <variation>V</variation>
    <location>
        <position position="64"/>
    </location>
</feature>
<feature type="helix" evidence="9">
    <location>
        <begin position="7"/>
        <end position="29"/>
    </location>
</feature>
<feature type="helix" evidence="9">
    <location>
        <begin position="30"/>
        <end position="33"/>
    </location>
</feature>
<feature type="helix" evidence="9">
    <location>
        <begin position="35"/>
        <end position="42"/>
    </location>
</feature>
<feature type="helix" evidence="9">
    <location>
        <begin position="44"/>
        <end position="46"/>
    </location>
</feature>
<feature type="helix" evidence="9">
    <location>
        <begin position="50"/>
        <end position="62"/>
    </location>
</feature>
<feature type="helix" evidence="9">
    <location>
        <begin position="64"/>
        <end position="81"/>
    </location>
</feature>
<feature type="helix" evidence="9">
    <location>
        <begin position="84"/>
        <end position="103"/>
    </location>
</feature>
<feature type="turn" evidence="9">
    <location>
        <begin position="105"/>
        <end position="109"/>
    </location>
</feature>
<feature type="strand" evidence="9">
    <location>
        <begin position="112"/>
        <end position="117"/>
    </location>
</feature>
<feature type="helix" evidence="9">
    <location>
        <begin position="120"/>
        <end position="124"/>
    </location>
</feature>
<feature type="helix" evidence="9">
    <location>
        <begin position="126"/>
        <end position="152"/>
    </location>
</feature>
<feature type="helix" evidence="9">
    <location>
        <begin position="157"/>
        <end position="159"/>
    </location>
</feature>
<feature type="helix" evidence="9">
    <location>
        <begin position="160"/>
        <end position="186"/>
    </location>
</feature>
<feature type="strand" evidence="8">
    <location>
        <begin position="187"/>
        <end position="189"/>
    </location>
</feature>
<feature type="turn" evidence="9">
    <location>
        <begin position="191"/>
        <end position="197"/>
    </location>
</feature>
<feature type="helix" evidence="9">
    <location>
        <begin position="198"/>
        <end position="204"/>
    </location>
</feature>
<feature type="helix" evidence="9">
    <location>
        <begin position="207"/>
        <end position="216"/>
    </location>
</feature>
<feature type="helix" evidence="9">
    <location>
        <begin position="217"/>
        <end position="219"/>
    </location>
</feature>
<feature type="helix" evidence="9">
    <location>
        <begin position="224"/>
        <end position="229"/>
    </location>
</feature>
<feature type="helix" evidence="9">
    <location>
        <begin position="233"/>
        <end position="266"/>
    </location>
</feature>
<feature type="helix" evidence="9">
    <location>
        <begin position="269"/>
        <end position="272"/>
    </location>
</feature>
<feature type="helix" evidence="9">
    <location>
        <begin position="277"/>
        <end position="290"/>
    </location>
</feature>
<feature type="helix" evidence="9">
    <location>
        <begin position="293"/>
        <end position="306"/>
    </location>
</feature>
<feature type="helix" evidence="9">
    <location>
        <begin position="311"/>
        <end position="339"/>
    </location>
</feature>
<feature type="helix" evidence="9">
    <location>
        <begin position="342"/>
        <end position="364"/>
    </location>
</feature>
<feature type="helix" evidence="9">
    <location>
        <begin position="369"/>
        <end position="384"/>
    </location>
</feature>
<feature type="turn" evidence="9">
    <location>
        <begin position="385"/>
        <end position="388"/>
    </location>
</feature>
<feature type="helix" evidence="9">
    <location>
        <begin position="389"/>
        <end position="397"/>
    </location>
</feature>
<feature type="turn" evidence="9">
    <location>
        <begin position="401"/>
        <end position="403"/>
    </location>
</feature>
<feature type="helix" evidence="9">
    <location>
        <begin position="404"/>
        <end position="423"/>
    </location>
</feature>
<feature type="helix" evidence="9">
    <location>
        <begin position="425"/>
        <end position="429"/>
    </location>
</feature>
<feature type="helix" evidence="9">
    <location>
        <begin position="431"/>
        <end position="439"/>
    </location>
</feature>
<feature type="helix" evidence="9">
    <location>
        <begin position="443"/>
        <end position="462"/>
    </location>
</feature>
<feature type="helix" evidence="9">
    <location>
        <begin position="471"/>
        <end position="474"/>
    </location>
</feature>
<feature type="helix" evidence="9">
    <location>
        <begin position="475"/>
        <end position="477"/>
    </location>
</feature>
<evidence type="ECO:0000269" key="1">
    <source>
    </source>
</evidence>
<evidence type="ECO:0000305" key="2"/>
<evidence type="ECO:0007744" key="3">
    <source>
        <dbReference type="PDB" id="4GBY"/>
    </source>
</evidence>
<evidence type="ECO:0007744" key="4">
    <source>
        <dbReference type="PDB" id="4GBZ"/>
    </source>
</evidence>
<evidence type="ECO:0007744" key="5">
    <source>
        <dbReference type="PDB" id="4GC0"/>
    </source>
</evidence>
<evidence type="ECO:0007744" key="6">
    <source>
        <dbReference type="PDB" id="4JA3"/>
    </source>
</evidence>
<evidence type="ECO:0007744" key="7">
    <source>
        <dbReference type="PDB" id="4JA4"/>
    </source>
</evidence>
<evidence type="ECO:0007829" key="8">
    <source>
        <dbReference type="PDB" id="4GBZ"/>
    </source>
</evidence>
<evidence type="ECO:0007829" key="9">
    <source>
        <dbReference type="PDB" id="4GC0"/>
    </source>
</evidence>
<keyword id="KW-0002">3D-structure</keyword>
<keyword id="KW-0997">Cell inner membrane</keyword>
<keyword id="KW-1003">Cell membrane</keyword>
<keyword id="KW-0472">Membrane</keyword>
<keyword id="KW-1185">Reference proteome</keyword>
<keyword id="KW-0762">Sugar transport</keyword>
<keyword id="KW-0769">Symport</keyword>
<keyword id="KW-0812">Transmembrane</keyword>
<keyword id="KW-1133">Transmembrane helix</keyword>
<keyword id="KW-0813">Transport</keyword>
<gene>
    <name type="primary">xylE</name>
    <name type="ordered locus">b4031</name>
    <name type="ordered locus">JW3991</name>
</gene>
<comment type="function">
    <text evidence="1">Uptake of D-xylose across the boundary membrane with the concomitant transport of protons into the cell (symport system). Glucose is not transported, but can compete for xylose binding sites and can inhibit xylose transport (in vitro).</text>
</comment>
<comment type="catalytic activity">
    <reaction evidence="1">
        <text>D-xylose(in) + H(+)(in) = D-xylose(out) + H(+)(out)</text>
        <dbReference type="Rhea" id="RHEA:28959"/>
        <dbReference type="ChEBI" id="CHEBI:15378"/>
        <dbReference type="ChEBI" id="CHEBI:53455"/>
    </reaction>
    <physiologicalReaction direction="right-to-left" evidence="1">
        <dbReference type="Rhea" id="RHEA:28961"/>
    </physiologicalReaction>
</comment>
<comment type="subcellular location">
    <subcellularLocation>
        <location evidence="1">Cell inner membrane</location>
        <topology evidence="1">Multi-pass membrane protein</topology>
    </subcellularLocation>
</comment>
<comment type="induction">
    <text>By xylose.</text>
</comment>
<comment type="miscellaneous">
    <text>E.coli has two D-xylose transport systems that accumulate sugar against a concentration gradient: the XylE system which utilizes the electrochemical gradient of protons and that is insensitive to cold osmotic shock and the XylF system that uses a high-energy phosphate compound and is sensitive to cold osmotic shock.</text>
</comment>
<comment type="similarity">
    <text evidence="2">Belongs to the major facilitator superfamily. Sugar transporter (TC 2.A.1.1) family.</text>
</comment>
<reference key="1">
    <citation type="journal article" date="1987" name="J. Biol. Chem.">
        <title>The cloning and DNA sequence of the gene xylE for xylose-proton symport in Escherichia coli K12.</title>
        <authorList>
            <person name="Davis E.O."/>
            <person name="Henderson P.J.F."/>
        </authorList>
    </citation>
    <scope>NUCLEOTIDE SEQUENCE [GENOMIC DNA]</scope>
    <source>
        <strain>K12</strain>
    </source>
</reference>
<reference key="2">
    <citation type="journal article" date="1987" name="Nature">
        <title>Mammalian and bacterial sugar transport proteins are homologous.</title>
        <authorList>
            <person name="Maiden M.C.J."/>
            <person name="Davis E.O."/>
            <person name="Baldwin S.A."/>
            <person name="Moore D.C.M."/>
            <person name="Henderson P.J.F."/>
        </authorList>
    </citation>
    <scope>NUCLEOTIDE SEQUENCE [GENOMIC DNA]</scope>
</reference>
<reference key="3">
    <citation type="journal article" date="1993" name="Nucleic Acids Res.">
        <title>Analysis of the Escherichia coli genome. IV. DNA sequence of the region from 89.2 to 92.8 minutes.</title>
        <authorList>
            <person name="Blattner F.R."/>
            <person name="Burland V.D."/>
            <person name="Plunkett G. III"/>
            <person name="Sofia H.J."/>
            <person name="Daniels D.L."/>
        </authorList>
    </citation>
    <scope>NUCLEOTIDE SEQUENCE [LARGE SCALE GENOMIC DNA]</scope>
    <source>
        <strain>K12 / MG1655 / ATCC 47076</strain>
    </source>
</reference>
<reference key="4">
    <citation type="journal article" date="1997" name="Science">
        <title>The complete genome sequence of Escherichia coli K-12.</title>
        <authorList>
            <person name="Blattner F.R."/>
            <person name="Plunkett G. III"/>
            <person name="Bloch C.A."/>
            <person name="Perna N.T."/>
            <person name="Burland V."/>
            <person name="Riley M."/>
            <person name="Collado-Vides J."/>
            <person name="Glasner J.D."/>
            <person name="Rode C.K."/>
            <person name="Mayhew G.F."/>
            <person name="Gregor J."/>
            <person name="Davis N.W."/>
            <person name="Kirkpatrick H.A."/>
            <person name="Goeden M.A."/>
            <person name="Rose D.J."/>
            <person name="Mau B."/>
            <person name="Shao Y."/>
        </authorList>
    </citation>
    <scope>NUCLEOTIDE SEQUENCE [LARGE SCALE GENOMIC DNA]</scope>
    <source>
        <strain>K12 / MG1655 / ATCC 47076</strain>
    </source>
</reference>
<reference key="5">
    <citation type="journal article" date="2006" name="Mol. Syst. Biol.">
        <title>Highly accurate genome sequences of Escherichia coli K-12 strains MG1655 and W3110.</title>
        <authorList>
            <person name="Hayashi K."/>
            <person name="Morooka N."/>
            <person name="Yamamoto Y."/>
            <person name="Fujita K."/>
            <person name="Isono K."/>
            <person name="Choi S."/>
            <person name="Ohtsubo E."/>
            <person name="Baba T."/>
            <person name="Wanner B.L."/>
            <person name="Mori H."/>
            <person name="Horiuchi T."/>
        </authorList>
    </citation>
    <scope>NUCLEOTIDE SEQUENCE [LARGE SCALE GENOMIC DNA]</scope>
    <source>
        <strain>K12 / W3110 / ATCC 27325 / DSM 5911</strain>
    </source>
</reference>
<reference key="6">
    <citation type="journal article" date="1988" name="Nucleic Acids Res.">
        <title>3' end of the malEFG operon in E.coli: localization of the transcription termination site.</title>
        <authorList>
            <person name="Francoz E."/>
            <person name="Dassa E."/>
        </authorList>
    </citation>
    <scope>NUCLEOTIDE SEQUENCE [GENOMIC DNA] OF 1-192</scope>
    <source>
        <strain>K12</strain>
    </source>
</reference>
<reference key="7">
    <citation type="journal article" date="2005" name="Science">
        <title>Global topology analysis of the Escherichia coli inner membrane proteome.</title>
        <authorList>
            <person name="Daley D.O."/>
            <person name="Rapp M."/>
            <person name="Granseth E."/>
            <person name="Melen K."/>
            <person name="Drew D."/>
            <person name="von Heijne G."/>
        </authorList>
    </citation>
    <scope>TOPOLOGY [LARGE SCALE ANALYSIS]</scope>
    <source>
        <strain>K12 / MG1655 / ATCC 47076</strain>
    </source>
</reference>
<reference evidence="3 4 5" key="8">
    <citation type="journal article" date="2012" name="Nature">
        <title>Crystal structure of a bacterial homologue of glucose transporters GLUT1-4.</title>
        <authorList>
            <person name="Sun L."/>
            <person name="Zeng X."/>
            <person name="Yan C."/>
            <person name="Sun X."/>
            <person name="Gong X."/>
            <person name="Rao Y."/>
            <person name="Yan N."/>
        </authorList>
    </citation>
    <scope>X-RAY CRYSTALLOGRAPHY (2.60 ANGSTROMS) IN COMPLEXES WITH BETA-D-XYLOPYRANOSE AND BETA-D-GLUCOSE</scope>
    <scope>FUNCTION</scope>
    <scope>CATALYTIC ACTIVITY</scope>
    <scope>SUBCELLULAR LOCATION</scope>
    <scope>TOPOLOGY</scope>
    <scope>MUTAGENESIS OF PHE-24; GLY-83; ARG-133; GLU-153; ARG-160; GLN-168; GLN-288; GLN-289; ASN-294; TYR-298; ASN-325; GLY-340; ARG-341; TRP-392; GLU-397; ARG-404 AND TRP-416</scope>
</reference>
<reference evidence="6 7" key="9">
    <citation type="journal article" date="2013" name="Nat. Struct. Mol. Biol.">
        <title>Structural basis for substrate transport in the GLUT-homology family of monosaccharide transporters.</title>
        <authorList>
            <person name="Quistgaard E.M."/>
            <person name="Low C."/>
            <person name="Moberg P."/>
            <person name="Tresaugues L."/>
            <person name="Nordlund P."/>
        </authorList>
    </citation>
    <scope>X-RAY CRYSTALLOGRAPHY (3.80 ANGSTROMS)</scope>
</reference>
<proteinExistence type="evidence at protein level"/>